<name>P2SAF_ORYSJ</name>
<keyword id="KW-0150">Chloroplast</keyword>
<keyword id="KW-0602">Photosynthesis</keyword>
<keyword id="KW-0604">Photosystem II</keyword>
<keyword id="KW-0934">Plastid</keyword>
<keyword id="KW-1185">Reference proteome</keyword>
<keyword id="KW-0793">Thylakoid</keyword>
<keyword id="KW-0809">Transit peptide</keyword>
<gene>
    <name type="primary">HCF136</name>
    <name type="ordered locus">Os06g0729500</name>
    <name type="ordered locus">LOC_Os06g51330</name>
    <name type="ORF">OSJNBa0069C14.15</name>
</gene>
<sequence>MATTASLHLHLHLLLSSSRRRCRLLVPRAHTDSISTGRRRFIADTATASAAAAVGPLVLPRTPLARADQPPSLSEWERVLLPIDPGVVLLDIAFVPDDPSHGFLLGTRQTILETKNGGNTWFPRSIPSAEDEDFNYRFNSVSFMGKEGWIIGKPAILLHTSDAGDSWERIPLSAQLPGNMVYIKATGEQSAEMVTDEGAIYVTSNRGYNWKAAVQETVSATLNRTVSSGISGASYYTGTFNTVNRSPDGRYVAVSSRGNFYLTWEPGQPFWQPHNRAVARRIQNMGWRADGGLWLLVRGGGLFLSKGSGFQFFYRGLNDAHAISYLHPPNQITEDFEEASVQSRGFGILDVGYRSKDEAWAAGGSGVLLKTTNGGKTWVRDKAADNIAANLYSVKFLGDNKGYVLGNDGVLLRYVG</sequence>
<accession>Q5Z5A8</accession>
<protein>
    <recommendedName>
        <fullName>Photosystem II stability/assembly factor HCF136, chloroplastic</fullName>
    </recommendedName>
</protein>
<reference key="1">
    <citation type="journal article" date="2005" name="Nature">
        <title>The map-based sequence of the rice genome.</title>
        <authorList>
            <consortium name="International rice genome sequencing project (IRGSP)"/>
        </authorList>
    </citation>
    <scope>NUCLEOTIDE SEQUENCE [LARGE SCALE GENOMIC DNA]</scope>
    <source>
        <strain>cv. Nipponbare</strain>
    </source>
</reference>
<reference key="2">
    <citation type="journal article" date="2013" name="Rice">
        <title>Improvement of the Oryza sativa Nipponbare reference genome using next generation sequence and optical map data.</title>
        <authorList>
            <person name="Kawahara Y."/>
            <person name="de la Bastide M."/>
            <person name="Hamilton J.P."/>
            <person name="Kanamori H."/>
            <person name="McCombie W.R."/>
            <person name="Ouyang S."/>
            <person name="Schwartz D.C."/>
            <person name="Tanaka T."/>
            <person name="Wu J."/>
            <person name="Zhou S."/>
            <person name="Childs K.L."/>
            <person name="Davidson R.M."/>
            <person name="Lin H."/>
            <person name="Quesada-Ocampo L."/>
            <person name="Vaillancourt B."/>
            <person name="Sakai H."/>
            <person name="Lee S.S."/>
            <person name="Kim J."/>
            <person name="Numa H."/>
            <person name="Itoh T."/>
            <person name="Buell C.R."/>
            <person name="Matsumoto T."/>
        </authorList>
    </citation>
    <scope>GENOME REANNOTATION</scope>
    <source>
        <strain>cv. Nipponbare</strain>
    </source>
</reference>
<feature type="transit peptide" description="Chloroplast" evidence="3">
    <location>
        <begin position="1"/>
        <end position="36"/>
    </location>
</feature>
<feature type="transit peptide" description="Thylakoid" evidence="4">
    <location>
        <begin position="37"/>
        <end position="67"/>
    </location>
</feature>
<feature type="chain" id="PRO_0000239672" description="Photosystem II stability/assembly factor HCF136, chloroplastic">
    <location>
        <begin position="68"/>
        <end position="416"/>
    </location>
</feature>
<proteinExistence type="inferred from homology"/>
<comment type="function">
    <text evidence="2">Essential for photosystem II (PSII) biogenesis; required for assembly of an early intermediate in PSII assembly that includes D2 (psbD) and cytochrome b559.</text>
</comment>
<comment type="subcellular location">
    <subcellularLocation>
        <location evidence="2">Plastid</location>
        <location evidence="2">Chloroplast thylakoid lumen</location>
    </subcellularLocation>
    <text evidence="2 4">Restricted to the stromal lamelae. Translocation into the thylakoid lumen occurs via the Tat pathway (By similarity). The position of the signal peptide cleavage has not been experimentally proven (By similarity).</text>
</comment>
<comment type="domain">
    <text evidence="1">A 7-bladed beta-propeller torus, about 54 by 55 Angstroms, with a depth of about 25 Angstroms and a central pore.</text>
</comment>
<comment type="similarity">
    <text evidence="5">Belongs to the Ycf48 family.</text>
</comment>
<evidence type="ECO:0000250" key="1">
    <source>
        <dbReference type="UniProtKB" id="M1VJU3"/>
    </source>
</evidence>
<evidence type="ECO:0000250" key="2">
    <source>
        <dbReference type="UniProtKB" id="O82660"/>
    </source>
</evidence>
<evidence type="ECO:0000255" key="3"/>
<evidence type="ECO:0000255" key="4">
    <source>
        <dbReference type="PROSITE-ProRule" id="PRU00648"/>
    </source>
</evidence>
<evidence type="ECO:0000305" key="5"/>
<organism>
    <name type="scientific">Oryza sativa subsp. japonica</name>
    <name type="common">Rice</name>
    <dbReference type="NCBI Taxonomy" id="39947"/>
    <lineage>
        <taxon>Eukaryota</taxon>
        <taxon>Viridiplantae</taxon>
        <taxon>Streptophyta</taxon>
        <taxon>Embryophyta</taxon>
        <taxon>Tracheophyta</taxon>
        <taxon>Spermatophyta</taxon>
        <taxon>Magnoliopsida</taxon>
        <taxon>Liliopsida</taxon>
        <taxon>Poales</taxon>
        <taxon>Poaceae</taxon>
        <taxon>BOP clade</taxon>
        <taxon>Oryzoideae</taxon>
        <taxon>Oryzeae</taxon>
        <taxon>Oryzinae</taxon>
        <taxon>Oryza</taxon>
        <taxon>Oryza sativa</taxon>
    </lineage>
</organism>
<dbReference type="EMBL" id="AP005750">
    <property type="protein sequence ID" value="BAD62115.1"/>
    <property type="molecule type" value="Genomic_DNA"/>
</dbReference>
<dbReference type="EMBL" id="AP014962">
    <property type="status" value="NOT_ANNOTATED_CDS"/>
    <property type="molecule type" value="Genomic_DNA"/>
</dbReference>
<dbReference type="SMR" id="Q5Z5A8"/>
<dbReference type="FunCoup" id="Q5Z5A8">
    <property type="interactions" value="1488"/>
</dbReference>
<dbReference type="STRING" id="39947.Q5Z5A8"/>
<dbReference type="PaxDb" id="39947-Q5Z5A8"/>
<dbReference type="eggNOG" id="KOG3511">
    <property type="taxonomic scope" value="Eukaryota"/>
</dbReference>
<dbReference type="HOGENOM" id="CLU_057027_0_0_1"/>
<dbReference type="InParanoid" id="Q5Z5A8"/>
<dbReference type="Proteomes" id="UP000000763">
    <property type="component" value="Chromosome 6"/>
</dbReference>
<dbReference type="Proteomes" id="UP000059680">
    <property type="component" value="Chromosome 6"/>
</dbReference>
<dbReference type="GO" id="GO:0009543">
    <property type="term" value="C:chloroplast thylakoid lumen"/>
    <property type="evidence" value="ECO:0007669"/>
    <property type="project" value="UniProtKB-SubCell"/>
</dbReference>
<dbReference type="GO" id="GO:0009523">
    <property type="term" value="C:photosystem II"/>
    <property type="evidence" value="ECO:0007669"/>
    <property type="project" value="UniProtKB-KW"/>
</dbReference>
<dbReference type="GO" id="GO:0015979">
    <property type="term" value="P:photosynthesis"/>
    <property type="evidence" value="ECO:0007669"/>
    <property type="project" value="UniProtKB-KW"/>
</dbReference>
<dbReference type="Gene3D" id="2.130.10.10">
    <property type="entry name" value="YVTN repeat-like/Quinoprotein amine dehydrogenase"/>
    <property type="match status" value="1"/>
</dbReference>
<dbReference type="InterPro" id="IPR028203">
    <property type="entry name" value="PSII_CF48-like_dom"/>
</dbReference>
<dbReference type="InterPro" id="IPR006311">
    <property type="entry name" value="TAT_signal"/>
</dbReference>
<dbReference type="InterPro" id="IPR015943">
    <property type="entry name" value="WD40/YVTN_repeat-like_dom_sf"/>
</dbReference>
<dbReference type="NCBIfam" id="NF010237">
    <property type="entry name" value="PRK13684.1"/>
    <property type="match status" value="1"/>
</dbReference>
<dbReference type="PANTHER" id="PTHR47199">
    <property type="entry name" value="PHOTOSYSTEM II STABILITY/ASSEMBLY FACTOR HCF136, CHLOROPLASTIC"/>
    <property type="match status" value="1"/>
</dbReference>
<dbReference type="PANTHER" id="PTHR47199:SF2">
    <property type="entry name" value="PHOTOSYSTEM II STABILITY_ASSEMBLY FACTOR HCF136, CHLOROPLASTIC"/>
    <property type="match status" value="1"/>
</dbReference>
<dbReference type="Pfam" id="PF14870">
    <property type="entry name" value="PSII_BNR"/>
    <property type="match status" value="1"/>
</dbReference>
<dbReference type="SUPFAM" id="SSF110296">
    <property type="entry name" value="Oligoxyloglucan reducing end-specific cellobiohydrolase"/>
    <property type="match status" value="1"/>
</dbReference>
<dbReference type="PROSITE" id="PS51318">
    <property type="entry name" value="TAT"/>
    <property type="match status" value="1"/>
</dbReference>